<evidence type="ECO:0000250" key="1">
    <source>
        <dbReference type="UniProtKB" id="P43132"/>
    </source>
</evidence>
<evidence type="ECO:0000255" key="2">
    <source>
        <dbReference type="PROSITE-ProRule" id="PRU00548"/>
    </source>
</evidence>
<evidence type="ECO:0000256" key="3">
    <source>
        <dbReference type="SAM" id="MobiDB-lite"/>
    </source>
</evidence>
<evidence type="ECO:0000269" key="4">
    <source>
    </source>
</evidence>
<evidence type="ECO:0000303" key="5">
    <source>
    </source>
</evidence>
<evidence type="ECO:0000305" key="6"/>
<name>CCLA_ASPFU</name>
<gene>
    <name evidence="5" type="primary">cclA</name>
    <name type="ORF">AFUA_3G04120</name>
</gene>
<protein>
    <recommendedName>
        <fullName evidence="5">COMPASS component cclA</fullName>
    </recommendedName>
</protein>
<organism>
    <name type="scientific">Aspergillus fumigatus (strain ATCC MYA-4609 / CBS 101355 / FGSC A1100 / Af293)</name>
    <name type="common">Neosartorya fumigata</name>
    <dbReference type="NCBI Taxonomy" id="330879"/>
    <lineage>
        <taxon>Eukaryota</taxon>
        <taxon>Fungi</taxon>
        <taxon>Dikarya</taxon>
        <taxon>Ascomycota</taxon>
        <taxon>Pezizomycotina</taxon>
        <taxon>Eurotiomycetes</taxon>
        <taxon>Eurotiomycetidae</taxon>
        <taxon>Eurotiales</taxon>
        <taxon>Aspergillaceae</taxon>
        <taxon>Aspergillus</taxon>
        <taxon>Aspergillus subgen. Fumigati</taxon>
    </lineage>
</organism>
<dbReference type="EMBL" id="AAHF01000010">
    <property type="protein sequence ID" value="EAL86692.1"/>
    <property type="molecule type" value="Genomic_DNA"/>
</dbReference>
<dbReference type="RefSeq" id="XP_748730.1">
    <property type="nucleotide sequence ID" value="XM_743637.1"/>
</dbReference>
<dbReference type="SMR" id="Q4WEY5"/>
<dbReference type="FunCoup" id="Q4WEY5">
    <property type="interactions" value="84"/>
</dbReference>
<dbReference type="STRING" id="330879.Q4WEY5"/>
<dbReference type="EnsemblFungi" id="EAL86692">
    <property type="protein sequence ID" value="EAL86692"/>
    <property type="gene ID" value="AFUA_3G04120"/>
</dbReference>
<dbReference type="GeneID" id="3506100"/>
<dbReference type="KEGG" id="afm:AFUA_3G04120"/>
<dbReference type="VEuPathDB" id="FungiDB:Afu3g04120"/>
<dbReference type="eggNOG" id="KOG2626">
    <property type="taxonomic scope" value="Eukaryota"/>
</dbReference>
<dbReference type="HOGENOM" id="CLU_014420_3_1_1"/>
<dbReference type="InParanoid" id="Q4WEY5"/>
<dbReference type="OMA" id="GFRYTYA"/>
<dbReference type="OrthoDB" id="10266026at2759"/>
<dbReference type="Proteomes" id="UP000002530">
    <property type="component" value="Chromosome 3"/>
</dbReference>
<dbReference type="GO" id="GO:0000781">
    <property type="term" value="C:chromosome, telomeric region"/>
    <property type="evidence" value="ECO:0007669"/>
    <property type="project" value="UniProtKB-SubCell"/>
</dbReference>
<dbReference type="GO" id="GO:0048188">
    <property type="term" value="C:Set1C/COMPASS complex"/>
    <property type="evidence" value="ECO:0000318"/>
    <property type="project" value="GO_Central"/>
</dbReference>
<dbReference type="GO" id="GO:0000976">
    <property type="term" value="F:transcription cis-regulatory region binding"/>
    <property type="evidence" value="ECO:0000318"/>
    <property type="project" value="GO_Central"/>
</dbReference>
<dbReference type="CDD" id="cd12872">
    <property type="entry name" value="SPRY_Ash2"/>
    <property type="match status" value="1"/>
</dbReference>
<dbReference type="Gene3D" id="2.60.120.920">
    <property type="match status" value="1"/>
</dbReference>
<dbReference type="InterPro" id="IPR037353">
    <property type="entry name" value="ASH2"/>
</dbReference>
<dbReference type="InterPro" id="IPR001870">
    <property type="entry name" value="B30.2/SPRY"/>
</dbReference>
<dbReference type="InterPro" id="IPR043136">
    <property type="entry name" value="B30.2/SPRY_sf"/>
</dbReference>
<dbReference type="InterPro" id="IPR013320">
    <property type="entry name" value="ConA-like_dom_sf"/>
</dbReference>
<dbReference type="InterPro" id="IPR003877">
    <property type="entry name" value="SPRY_dom"/>
</dbReference>
<dbReference type="PANTHER" id="PTHR10598">
    <property type="entry name" value="SET1/ASH2 HISTONE METHYLTRANSFERASE COMPLEX SUBUNIT ASH2"/>
    <property type="match status" value="1"/>
</dbReference>
<dbReference type="PANTHER" id="PTHR10598:SF0">
    <property type="entry name" value="SET1_ASH2 HISTONE METHYLTRANSFERASE COMPLEX SUBUNIT ASH2"/>
    <property type="match status" value="1"/>
</dbReference>
<dbReference type="SMART" id="SM00449">
    <property type="entry name" value="SPRY"/>
    <property type="match status" value="1"/>
</dbReference>
<dbReference type="SUPFAM" id="SSF49899">
    <property type="entry name" value="Concanavalin A-like lectins/glucanases"/>
    <property type="match status" value="1"/>
</dbReference>
<dbReference type="PROSITE" id="PS50188">
    <property type="entry name" value="B302_SPRY"/>
    <property type="match status" value="1"/>
</dbReference>
<reference key="1">
    <citation type="journal article" date="2005" name="Nature">
        <title>Genomic sequence of the pathogenic and allergenic filamentous fungus Aspergillus fumigatus.</title>
        <authorList>
            <person name="Nierman W.C."/>
            <person name="Pain A."/>
            <person name="Anderson M.J."/>
            <person name="Wortman J.R."/>
            <person name="Kim H.S."/>
            <person name="Arroyo J."/>
            <person name="Berriman M."/>
            <person name="Abe K."/>
            <person name="Archer D.B."/>
            <person name="Bermejo C."/>
            <person name="Bennett J.W."/>
            <person name="Bowyer P."/>
            <person name="Chen D."/>
            <person name="Collins M."/>
            <person name="Coulsen R."/>
            <person name="Davies R."/>
            <person name="Dyer P.S."/>
            <person name="Farman M.L."/>
            <person name="Fedorova N."/>
            <person name="Fedorova N.D."/>
            <person name="Feldblyum T.V."/>
            <person name="Fischer R."/>
            <person name="Fosker N."/>
            <person name="Fraser A."/>
            <person name="Garcia J.L."/>
            <person name="Garcia M.J."/>
            <person name="Goble A."/>
            <person name="Goldman G.H."/>
            <person name="Gomi K."/>
            <person name="Griffith-Jones S."/>
            <person name="Gwilliam R."/>
            <person name="Haas B.J."/>
            <person name="Haas H."/>
            <person name="Harris D.E."/>
            <person name="Horiuchi H."/>
            <person name="Huang J."/>
            <person name="Humphray S."/>
            <person name="Jimenez J."/>
            <person name="Keller N."/>
            <person name="Khouri H."/>
            <person name="Kitamoto K."/>
            <person name="Kobayashi T."/>
            <person name="Konzack S."/>
            <person name="Kulkarni R."/>
            <person name="Kumagai T."/>
            <person name="Lafton A."/>
            <person name="Latge J.-P."/>
            <person name="Li W."/>
            <person name="Lord A."/>
            <person name="Lu C."/>
            <person name="Majoros W.H."/>
            <person name="May G.S."/>
            <person name="Miller B.L."/>
            <person name="Mohamoud Y."/>
            <person name="Molina M."/>
            <person name="Monod M."/>
            <person name="Mouyna I."/>
            <person name="Mulligan S."/>
            <person name="Murphy L.D."/>
            <person name="O'Neil S."/>
            <person name="Paulsen I."/>
            <person name="Penalva M.A."/>
            <person name="Pertea M."/>
            <person name="Price C."/>
            <person name="Pritchard B.L."/>
            <person name="Quail M.A."/>
            <person name="Rabbinowitsch E."/>
            <person name="Rawlins N."/>
            <person name="Rajandream M.A."/>
            <person name="Reichard U."/>
            <person name="Renauld H."/>
            <person name="Robson G.D."/>
            <person name="Rodriguez de Cordoba S."/>
            <person name="Rodriguez-Pena J.M."/>
            <person name="Ronning C.M."/>
            <person name="Rutter S."/>
            <person name="Salzberg S.L."/>
            <person name="Sanchez M."/>
            <person name="Sanchez-Ferrero J.C."/>
            <person name="Saunders D."/>
            <person name="Seeger K."/>
            <person name="Squares R."/>
            <person name="Squares S."/>
            <person name="Takeuchi M."/>
            <person name="Tekaia F."/>
            <person name="Turner G."/>
            <person name="Vazquez de Aldana C.R."/>
            <person name="Weidman J."/>
            <person name="White O."/>
            <person name="Woodward J.R."/>
            <person name="Yu J.-H."/>
            <person name="Fraser C.M."/>
            <person name="Galagan J.E."/>
            <person name="Asai K."/>
            <person name="Machida M."/>
            <person name="Hall N."/>
            <person name="Barrell B.G."/>
            <person name="Denning D.W."/>
        </authorList>
    </citation>
    <scope>NUCLEOTIDE SEQUENCE [LARGE SCALE GENOMIC DNA]</scope>
    <source>
        <strain>ATCC MYA-4609 / CBS 101355 / FGSC A1100 / Af293</strain>
    </source>
</reference>
<reference key="2">
    <citation type="journal article" date="2013" name="PeerJ">
        <title>Loss of CclA, required for histone 3 lysine 4 methylation, decreases growth but increases secondary metabolite production in Aspergillus fumigatus.</title>
        <authorList>
            <person name="Palmer J.M."/>
            <person name="Bok J.W."/>
            <person name="Lee S."/>
            <person name="Dagenais T.R.T."/>
            <person name="Andes D.R."/>
            <person name="Kontoyiannis D.P."/>
            <person name="Keller N.P."/>
        </authorList>
    </citation>
    <scope>FUNCTION</scope>
    <scope>DISRUPTION PHENOTYPE</scope>
</reference>
<accession>Q4WEY5</accession>
<comment type="function">
    <text evidence="1 4">Component of the COMPASS (Set1C) complex that specifically mono-, di- and trimethylates histone H3 to form H3K4me1/2/3, which subsequently plays a role in telomere length maintenance and transcription elongation regulation (By similarity). Controls the production of several secondary metabolites, including gliotoxin, but does not contribute to pathogenicity (PubMed:23638376).</text>
</comment>
<comment type="subunit">
    <text evidence="4">Component of the COMPASS complex.</text>
</comment>
<comment type="subcellular location">
    <subcellularLocation>
        <location evidence="6">Nucleus</location>
    </subcellularLocation>
    <subcellularLocation>
        <location evidence="6">Chromosome</location>
        <location evidence="6">Telomere</location>
    </subcellularLocation>
</comment>
<comment type="disruption phenotype">
    <text evidence="4">Impairs tri- and dimethylation of H3K4 (PubMed:23638376). Results in sensitivity to 6-azauracil (PubMed:23638376). Leads to increased production of several secondary metabolites, including gliotoxin (PubMed:23638376). Does not affect pathogenicity in a murine model and the Toll-deficient Drosophila model of invasive aspergillosis (PubMed:23638376).</text>
</comment>
<comment type="similarity">
    <text evidence="6">Belongs to the cclA family.</text>
</comment>
<feature type="chain" id="PRO_0000458879" description="COMPASS component cclA">
    <location>
        <begin position="1"/>
        <end position="618"/>
    </location>
</feature>
<feature type="domain" description="B30.2/SPRY" evidence="2">
    <location>
        <begin position="157"/>
        <end position="368"/>
    </location>
</feature>
<feature type="region of interest" description="Disordered" evidence="3">
    <location>
        <begin position="1"/>
        <end position="91"/>
    </location>
</feature>
<feature type="region of interest" description="Disordered" evidence="3">
    <location>
        <begin position="588"/>
        <end position="618"/>
    </location>
</feature>
<feature type="compositionally biased region" description="Low complexity" evidence="3">
    <location>
        <begin position="8"/>
        <end position="19"/>
    </location>
</feature>
<feature type="compositionally biased region" description="Low complexity" evidence="3">
    <location>
        <begin position="37"/>
        <end position="49"/>
    </location>
</feature>
<feature type="compositionally biased region" description="Basic residues" evidence="3">
    <location>
        <begin position="57"/>
        <end position="69"/>
    </location>
</feature>
<sequence length="618" mass="66347">MSSIQPVGSSGPSSNINSPTLPPGTAPFFSGTVTGQNARSSPAPPSNASVQTDGTRSKRNKRDSRKKREAKGLDQESIPPKKKAAVAPNSALPSSDISILRPLLLAEPRASDLLPPQPRQLSFVSRKTSDVLGQSWDFYEVVDKLTNKNGFRYSYAIADPGFPHIKYRQTDVPPYHARFSFEDSPAAIFFSEDARAVTASSAWHTARANVCAREGAYYYEARVINGIPNNSQSISANESSHRTPKGHVRLGFARREADLDANVGVDCYGYGIRDVNGEVVNRMRCEYFFPKGESIREGDVIGMLITLPPLSLHKKVVEGTYDPAVDGDGTSPTSEAHTSTNLIRDRIPFHYKSDFCWQQSNVFSTKHLRDYAFNLKETPTFGPPSPFNSEDPSLRTLPGSSITIFKNGEKMGTPFKELYAFLPPASRLANGTNNLGIGERENADDGMIGYYPAVSCYGGGAVECRFEGPWWVGPPSHADNGEPVRGIGERFNEQIVEDVVADIVDEVEAMLIWGGVDGDVVGNAEVDSAGAGAVGGSEVLKGGVGAAFDPRLDSVPGAAEFADTENISNGLEAGVTDADAGHLTTEDTLSVGHEGSPNPATPSAPLENTVPTEDVEMS</sequence>
<keyword id="KW-0158">Chromosome</keyword>
<keyword id="KW-0539">Nucleus</keyword>
<keyword id="KW-1185">Reference proteome</keyword>
<keyword id="KW-0779">Telomere</keyword>
<proteinExistence type="inferred from homology"/>